<comment type="function">
    <text evidence="1">Catalyzes the condensation of pantoate with beta-alanine in an ATP-dependent reaction via a pantoyl-adenylate intermediate.</text>
</comment>
<comment type="catalytic activity">
    <reaction evidence="1">
        <text>(R)-pantoate + beta-alanine + ATP = (R)-pantothenate + AMP + diphosphate + H(+)</text>
        <dbReference type="Rhea" id="RHEA:10912"/>
        <dbReference type="ChEBI" id="CHEBI:15378"/>
        <dbReference type="ChEBI" id="CHEBI:15980"/>
        <dbReference type="ChEBI" id="CHEBI:29032"/>
        <dbReference type="ChEBI" id="CHEBI:30616"/>
        <dbReference type="ChEBI" id="CHEBI:33019"/>
        <dbReference type="ChEBI" id="CHEBI:57966"/>
        <dbReference type="ChEBI" id="CHEBI:456215"/>
        <dbReference type="EC" id="6.3.2.1"/>
    </reaction>
</comment>
<comment type="pathway">
    <text evidence="1">Cofactor biosynthesis; (R)-pantothenate biosynthesis; (R)-pantothenate from (R)-pantoate and beta-alanine: step 1/1.</text>
</comment>
<comment type="subunit">
    <text evidence="1">Homodimer.</text>
</comment>
<comment type="subcellular location">
    <subcellularLocation>
        <location evidence="1">Cytoplasm</location>
    </subcellularLocation>
</comment>
<comment type="miscellaneous">
    <text evidence="1">The reaction proceeds by a bi uni uni bi ping pong mechanism.</text>
</comment>
<comment type="similarity">
    <text evidence="1">Belongs to the pantothenate synthetase family.</text>
</comment>
<name>PANC_METCA</name>
<dbReference type="EC" id="6.3.2.1" evidence="1"/>
<dbReference type="EMBL" id="AE017282">
    <property type="protein sequence ID" value="AAU91632.1"/>
    <property type="molecule type" value="Genomic_DNA"/>
</dbReference>
<dbReference type="RefSeq" id="WP_010961543.1">
    <property type="nucleotide sequence ID" value="NC_002977.6"/>
</dbReference>
<dbReference type="SMR" id="Q605G9"/>
<dbReference type="STRING" id="243233.MCA2315"/>
<dbReference type="GeneID" id="88224519"/>
<dbReference type="KEGG" id="mca:MCA2315"/>
<dbReference type="eggNOG" id="COG0414">
    <property type="taxonomic scope" value="Bacteria"/>
</dbReference>
<dbReference type="HOGENOM" id="CLU_047148_0_0_6"/>
<dbReference type="UniPathway" id="UPA00028">
    <property type="reaction ID" value="UER00005"/>
</dbReference>
<dbReference type="Proteomes" id="UP000006821">
    <property type="component" value="Chromosome"/>
</dbReference>
<dbReference type="GO" id="GO:0005829">
    <property type="term" value="C:cytosol"/>
    <property type="evidence" value="ECO:0007669"/>
    <property type="project" value="TreeGrafter"/>
</dbReference>
<dbReference type="GO" id="GO:0005524">
    <property type="term" value="F:ATP binding"/>
    <property type="evidence" value="ECO:0007669"/>
    <property type="project" value="UniProtKB-KW"/>
</dbReference>
<dbReference type="GO" id="GO:0004592">
    <property type="term" value="F:pantoate-beta-alanine ligase activity"/>
    <property type="evidence" value="ECO:0007669"/>
    <property type="project" value="UniProtKB-UniRule"/>
</dbReference>
<dbReference type="GO" id="GO:0015940">
    <property type="term" value="P:pantothenate biosynthetic process"/>
    <property type="evidence" value="ECO:0007669"/>
    <property type="project" value="UniProtKB-UniRule"/>
</dbReference>
<dbReference type="CDD" id="cd00560">
    <property type="entry name" value="PanC"/>
    <property type="match status" value="1"/>
</dbReference>
<dbReference type="FunFam" id="3.30.1300.10:FF:000001">
    <property type="entry name" value="Pantothenate synthetase"/>
    <property type="match status" value="1"/>
</dbReference>
<dbReference type="FunFam" id="3.40.50.620:FF:000013">
    <property type="entry name" value="Pantothenate synthetase"/>
    <property type="match status" value="1"/>
</dbReference>
<dbReference type="Gene3D" id="3.40.50.620">
    <property type="entry name" value="HUPs"/>
    <property type="match status" value="1"/>
</dbReference>
<dbReference type="Gene3D" id="3.30.1300.10">
    <property type="entry name" value="Pantoate-beta-alanine ligase, C-terminal domain"/>
    <property type="match status" value="1"/>
</dbReference>
<dbReference type="HAMAP" id="MF_00158">
    <property type="entry name" value="PanC"/>
    <property type="match status" value="1"/>
</dbReference>
<dbReference type="InterPro" id="IPR004821">
    <property type="entry name" value="Cyt_trans-like"/>
</dbReference>
<dbReference type="InterPro" id="IPR003721">
    <property type="entry name" value="Pantoate_ligase"/>
</dbReference>
<dbReference type="InterPro" id="IPR042176">
    <property type="entry name" value="Pantoate_ligase_C"/>
</dbReference>
<dbReference type="InterPro" id="IPR014729">
    <property type="entry name" value="Rossmann-like_a/b/a_fold"/>
</dbReference>
<dbReference type="NCBIfam" id="TIGR00125">
    <property type="entry name" value="cyt_tran_rel"/>
    <property type="match status" value="1"/>
</dbReference>
<dbReference type="NCBIfam" id="TIGR00018">
    <property type="entry name" value="panC"/>
    <property type="match status" value="1"/>
</dbReference>
<dbReference type="PANTHER" id="PTHR21299">
    <property type="entry name" value="CYTIDYLATE KINASE/PANTOATE-BETA-ALANINE LIGASE"/>
    <property type="match status" value="1"/>
</dbReference>
<dbReference type="PANTHER" id="PTHR21299:SF1">
    <property type="entry name" value="PANTOATE--BETA-ALANINE LIGASE"/>
    <property type="match status" value="1"/>
</dbReference>
<dbReference type="Pfam" id="PF02569">
    <property type="entry name" value="Pantoate_ligase"/>
    <property type="match status" value="1"/>
</dbReference>
<dbReference type="SUPFAM" id="SSF52374">
    <property type="entry name" value="Nucleotidylyl transferase"/>
    <property type="match status" value="1"/>
</dbReference>
<proteinExistence type="inferred from homology"/>
<evidence type="ECO:0000255" key="1">
    <source>
        <dbReference type="HAMAP-Rule" id="MF_00158"/>
    </source>
</evidence>
<feature type="chain" id="PRO_0000128241" description="Pantothenate synthetase">
    <location>
        <begin position="1"/>
        <end position="286"/>
    </location>
</feature>
<feature type="active site" description="Proton donor" evidence="1">
    <location>
        <position position="37"/>
    </location>
</feature>
<feature type="binding site" evidence="1">
    <location>
        <begin position="30"/>
        <end position="37"/>
    </location>
    <ligand>
        <name>ATP</name>
        <dbReference type="ChEBI" id="CHEBI:30616"/>
    </ligand>
</feature>
<feature type="binding site" evidence="1">
    <location>
        <position position="61"/>
    </location>
    <ligand>
        <name>(R)-pantoate</name>
        <dbReference type="ChEBI" id="CHEBI:15980"/>
    </ligand>
</feature>
<feature type="binding site" evidence="1">
    <location>
        <position position="61"/>
    </location>
    <ligand>
        <name>beta-alanine</name>
        <dbReference type="ChEBI" id="CHEBI:57966"/>
    </ligand>
</feature>
<feature type="binding site" evidence="1">
    <location>
        <begin position="149"/>
        <end position="152"/>
    </location>
    <ligand>
        <name>ATP</name>
        <dbReference type="ChEBI" id="CHEBI:30616"/>
    </ligand>
</feature>
<feature type="binding site" evidence="1">
    <location>
        <position position="155"/>
    </location>
    <ligand>
        <name>(R)-pantoate</name>
        <dbReference type="ChEBI" id="CHEBI:15980"/>
    </ligand>
</feature>
<feature type="binding site" evidence="1">
    <location>
        <position position="178"/>
    </location>
    <ligand>
        <name>ATP</name>
        <dbReference type="ChEBI" id="CHEBI:30616"/>
    </ligand>
</feature>
<feature type="binding site" evidence="1">
    <location>
        <begin position="186"/>
        <end position="189"/>
    </location>
    <ligand>
        <name>ATP</name>
        <dbReference type="ChEBI" id="CHEBI:30616"/>
    </ligand>
</feature>
<gene>
    <name evidence="1" type="primary">panC</name>
    <name type="ordered locus">MCA2315</name>
</gene>
<sequence length="286" mass="31388">MKIVSTKTELEAVLAPWRAADDSIAFVPTMGNLHAGHLHLVDTAKTKARRVVVSIFVNPTQFGPDEDLAAYPRTPEQDIERLRAHQADLLYLPDAADVYPDDGQPATFVEVPGLSEQLCGKFRPGHFRGVATVVCKLLNRVRPDLALFGEKDFQQLTVIRKMVRDLDMAVTIMGVPTVREPSGLAMSSRNAYLSPEQKERASLIFRTLNQAAEAVRAGERDYARIEQEASATLEAGGFSVDYVSIRRQQDLAAPSADDSALVILAAAHLGRARLIDNVLISLDTTR</sequence>
<organism>
    <name type="scientific">Methylococcus capsulatus (strain ATCC 33009 / NCIMB 11132 / Bath)</name>
    <dbReference type="NCBI Taxonomy" id="243233"/>
    <lineage>
        <taxon>Bacteria</taxon>
        <taxon>Pseudomonadati</taxon>
        <taxon>Pseudomonadota</taxon>
        <taxon>Gammaproteobacteria</taxon>
        <taxon>Methylococcales</taxon>
        <taxon>Methylococcaceae</taxon>
        <taxon>Methylococcus</taxon>
    </lineage>
</organism>
<protein>
    <recommendedName>
        <fullName evidence="1">Pantothenate synthetase</fullName>
        <shortName evidence="1">PS</shortName>
        <ecNumber evidence="1">6.3.2.1</ecNumber>
    </recommendedName>
    <alternativeName>
        <fullName evidence="1">Pantoate--beta-alanine ligase</fullName>
    </alternativeName>
    <alternativeName>
        <fullName evidence="1">Pantoate-activating enzyme</fullName>
    </alternativeName>
</protein>
<accession>Q605G9</accession>
<keyword id="KW-0067">ATP-binding</keyword>
<keyword id="KW-0963">Cytoplasm</keyword>
<keyword id="KW-0436">Ligase</keyword>
<keyword id="KW-0547">Nucleotide-binding</keyword>
<keyword id="KW-0566">Pantothenate biosynthesis</keyword>
<keyword id="KW-1185">Reference proteome</keyword>
<reference key="1">
    <citation type="journal article" date="2004" name="PLoS Biol.">
        <title>Genomic insights into methanotrophy: the complete genome sequence of Methylococcus capsulatus (Bath).</title>
        <authorList>
            <person name="Ward N.L."/>
            <person name="Larsen O."/>
            <person name="Sakwa J."/>
            <person name="Bruseth L."/>
            <person name="Khouri H.M."/>
            <person name="Durkin A.S."/>
            <person name="Dimitrov G."/>
            <person name="Jiang L."/>
            <person name="Scanlan D."/>
            <person name="Kang K.H."/>
            <person name="Lewis M.R."/>
            <person name="Nelson K.E."/>
            <person name="Methe B.A."/>
            <person name="Wu M."/>
            <person name="Heidelberg J.F."/>
            <person name="Paulsen I.T."/>
            <person name="Fouts D.E."/>
            <person name="Ravel J."/>
            <person name="Tettelin H."/>
            <person name="Ren Q."/>
            <person name="Read T.D."/>
            <person name="DeBoy R.T."/>
            <person name="Seshadri R."/>
            <person name="Salzberg S.L."/>
            <person name="Jensen H.B."/>
            <person name="Birkeland N.K."/>
            <person name="Nelson W.C."/>
            <person name="Dodson R.J."/>
            <person name="Grindhaug S.H."/>
            <person name="Holt I.E."/>
            <person name="Eidhammer I."/>
            <person name="Jonasen I."/>
            <person name="Vanaken S."/>
            <person name="Utterback T.R."/>
            <person name="Feldblyum T.V."/>
            <person name="Fraser C.M."/>
            <person name="Lillehaug J.R."/>
            <person name="Eisen J.A."/>
        </authorList>
    </citation>
    <scope>NUCLEOTIDE SEQUENCE [LARGE SCALE GENOMIC DNA]</scope>
    <source>
        <strain>ATCC 33009 / NCIMB 11132 / Bath</strain>
    </source>
</reference>